<evidence type="ECO:0000305" key="1"/>
<accession>Q1XDB4</accession>
<name>YCF23_PYRYE</name>
<sequence length="273" mass="30092">MTISSNIATDFTDKQAVKVITGLNNFKIQQIKQMTQASEIAGATYLDIAADINIIEEIRSTSTIPICVSAITAEELVHCQQAGVQILEIGNYDAFYEQGRLFSSREIMEISQNTRERLPETTLCVTIPHILCIEEQIKLTQDLQNIGVDIIQTEGKSTSFSKQGDLSGIIQKSASTCSSTYAISKNSNIPIISASGISALTSPISFLYGASCIGISTNIKRLNNVASMVMYIYEIKTAIEYNRGVKKDINHSIRKSIINCQLGYYDLRMESHV</sequence>
<proteinExistence type="inferred from homology"/>
<gene>
    <name type="primary">ycf23</name>
</gene>
<dbReference type="EMBL" id="AP006715">
    <property type="protein sequence ID" value="BAE92497.1"/>
    <property type="molecule type" value="Genomic_DNA"/>
</dbReference>
<dbReference type="RefSeq" id="YP_537054.1">
    <property type="nucleotide sequence ID" value="NC_007932.1"/>
</dbReference>
<dbReference type="GO" id="GO:0009507">
    <property type="term" value="C:chloroplast"/>
    <property type="evidence" value="ECO:0007669"/>
    <property type="project" value="UniProtKB-SubCell"/>
</dbReference>
<dbReference type="InterPro" id="IPR007570">
    <property type="entry name" value="Uncharacterised_Ycf23"/>
</dbReference>
<dbReference type="PANTHER" id="PTHR36895">
    <property type="match status" value="1"/>
</dbReference>
<dbReference type="PANTHER" id="PTHR36895:SF1">
    <property type="entry name" value="YCF23 PROTEIN"/>
    <property type="match status" value="1"/>
</dbReference>
<dbReference type="Pfam" id="PF04481">
    <property type="entry name" value="DUF561"/>
    <property type="match status" value="1"/>
</dbReference>
<dbReference type="SUPFAM" id="SSF51569">
    <property type="entry name" value="Aldolase"/>
    <property type="match status" value="1"/>
</dbReference>
<geneLocation type="chloroplast"/>
<comment type="subcellular location">
    <subcellularLocation>
        <location>Plastid</location>
        <location>Chloroplast</location>
    </subcellularLocation>
</comment>
<comment type="similarity">
    <text evidence="1">Belongs to the ycf23 family.</text>
</comment>
<feature type="chain" id="PRO_0000277271" description="Uncharacterized protein ycf23">
    <location>
        <begin position="1"/>
        <end position="273"/>
    </location>
</feature>
<protein>
    <recommendedName>
        <fullName>Uncharacterized protein ycf23</fullName>
    </recommendedName>
</protein>
<reference key="1">
    <citation type="submission" date="2003-11" db="EMBL/GenBank/DDBJ databases">
        <title>Whole genome sequence of Porphyra yezoensis chloroplast.</title>
        <authorList>
            <person name="Kunimoto M."/>
            <person name="Morishima K."/>
            <person name="Yoshikawa M."/>
            <person name="Fukuda S."/>
            <person name="Kobayashi T."/>
            <person name="Kobayashi M."/>
            <person name="Okazaki T."/>
            <person name="Ohara I."/>
            <person name="Nakayama I."/>
        </authorList>
    </citation>
    <scope>NUCLEOTIDE SEQUENCE [LARGE SCALE GENOMIC DNA]</scope>
    <source>
        <strain>U-51</strain>
    </source>
</reference>
<organism>
    <name type="scientific">Pyropia yezoensis</name>
    <name type="common">Susabi-nori</name>
    <name type="synonym">Porphyra yezoensis</name>
    <dbReference type="NCBI Taxonomy" id="2788"/>
    <lineage>
        <taxon>Eukaryota</taxon>
        <taxon>Rhodophyta</taxon>
        <taxon>Bangiophyceae</taxon>
        <taxon>Bangiales</taxon>
        <taxon>Bangiaceae</taxon>
        <taxon>Pyropia</taxon>
    </lineage>
</organism>
<keyword id="KW-0150">Chloroplast</keyword>
<keyword id="KW-0934">Plastid</keyword>